<protein>
    <recommendedName>
        <fullName evidence="1">Lipoyl synthase</fullName>
        <ecNumber evidence="1">2.8.1.8</ecNumber>
    </recommendedName>
    <alternativeName>
        <fullName evidence="1">Lip-syn</fullName>
        <shortName evidence="1">LS</shortName>
    </alternativeName>
    <alternativeName>
        <fullName evidence="1">Lipoate synthase</fullName>
    </alternativeName>
    <alternativeName>
        <fullName evidence="1">Lipoic acid synthase</fullName>
    </alternativeName>
    <alternativeName>
        <fullName evidence="1">Sulfur insertion protein LipA</fullName>
    </alternativeName>
</protein>
<organism>
    <name type="scientific">Brucella melitensis biotype 1 (strain ATCC 23456 / CCUG 17765 / NCTC 10094 / 16M)</name>
    <dbReference type="NCBI Taxonomy" id="224914"/>
    <lineage>
        <taxon>Bacteria</taxon>
        <taxon>Pseudomonadati</taxon>
        <taxon>Pseudomonadota</taxon>
        <taxon>Alphaproteobacteria</taxon>
        <taxon>Hyphomicrobiales</taxon>
        <taxon>Brucellaceae</taxon>
        <taxon>Brucella/Ochrobactrum group</taxon>
        <taxon>Brucella</taxon>
    </lineage>
</organism>
<proteinExistence type="inferred from homology"/>
<name>LIPA_BRUME</name>
<reference key="1">
    <citation type="journal article" date="2002" name="Proc. Natl. Acad. Sci. U.S.A.">
        <title>The genome sequence of the facultative intracellular pathogen Brucella melitensis.</title>
        <authorList>
            <person name="DelVecchio V.G."/>
            <person name="Kapatral V."/>
            <person name="Redkar R.J."/>
            <person name="Patra G."/>
            <person name="Mujer C."/>
            <person name="Los T."/>
            <person name="Ivanova N."/>
            <person name="Anderson I."/>
            <person name="Bhattacharyya A."/>
            <person name="Lykidis A."/>
            <person name="Reznik G."/>
            <person name="Jablonski L."/>
            <person name="Larsen N."/>
            <person name="D'Souza M."/>
            <person name="Bernal A."/>
            <person name="Mazur M."/>
            <person name="Goltsman E."/>
            <person name="Selkov E."/>
            <person name="Elzer P.H."/>
            <person name="Hagius S."/>
            <person name="O'Callaghan D."/>
            <person name="Letesson J.-J."/>
            <person name="Haselkorn R."/>
            <person name="Kyrpides N.C."/>
            <person name="Overbeek R."/>
        </authorList>
    </citation>
    <scope>NUCLEOTIDE SEQUENCE [LARGE SCALE GENOMIC DNA]</scope>
    <source>
        <strain>ATCC 23456 / CCUG 17765 / NCTC 10094 / 16M</strain>
    </source>
</reference>
<gene>
    <name evidence="1" type="primary">lipA</name>
    <name type="ordered locus">BMEI0859</name>
</gene>
<evidence type="ECO:0000255" key="1">
    <source>
        <dbReference type="HAMAP-Rule" id="MF_00206"/>
    </source>
</evidence>
<evidence type="ECO:0000255" key="2">
    <source>
        <dbReference type="PROSITE-ProRule" id="PRU01266"/>
    </source>
</evidence>
<evidence type="ECO:0000256" key="3">
    <source>
        <dbReference type="SAM" id="MobiDB-lite"/>
    </source>
</evidence>
<dbReference type="EC" id="2.8.1.8" evidence="1"/>
<dbReference type="EMBL" id="AE008917">
    <property type="protein sequence ID" value="AAL52040.1"/>
    <property type="molecule type" value="Genomic_DNA"/>
</dbReference>
<dbReference type="PIR" id="AE3359">
    <property type="entry name" value="AE3359"/>
</dbReference>
<dbReference type="RefSeq" id="WP_002964253.1">
    <property type="nucleotide sequence ID" value="NZ_GG703780.1"/>
</dbReference>
<dbReference type="SMR" id="P65281"/>
<dbReference type="GeneID" id="97533623"/>
<dbReference type="KEGG" id="bme:BMEI0859"/>
<dbReference type="KEGG" id="bmel:DK63_562"/>
<dbReference type="PATRIC" id="fig|224914.52.peg.584"/>
<dbReference type="eggNOG" id="COG0320">
    <property type="taxonomic scope" value="Bacteria"/>
</dbReference>
<dbReference type="PhylomeDB" id="P65281"/>
<dbReference type="UniPathway" id="UPA00538">
    <property type="reaction ID" value="UER00593"/>
</dbReference>
<dbReference type="Proteomes" id="UP000000419">
    <property type="component" value="Chromosome I"/>
</dbReference>
<dbReference type="GO" id="GO:0005737">
    <property type="term" value="C:cytoplasm"/>
    <property type="evidence" value="ECO:0007669"/>
    <property type="project" value="UniProtKB-SubCell"/>
</dbReference>
<dbReference type="GO" id="GO:0051539">
    <property type="term" value="F:4 iron, 4 sulfur cluster binding"/>
    <property type="evidence" value="ECO:0007669"/>
    <property type="project" value="UniProtKB-UniRule"/>
</dbReference>
<dbReference type="GO" id="GO:0016992">
    <property type="term" value="F:lipoate synthase activity"/>
    <property type="evidence" value="ECO:0007669"/>
    <property type="project" value="UniProtKB-UniRule"/>
</dbReference>
<dbReference type="GO" id="GO:0046872">
    <property type="term" value="F:metal ion binding"/>
    <property type="evidence" value="ECO:0007669"/>
    <property type="project" value="UniProtKB-KW"/>
</dbReference>
<dbReference type="CDD" id="cd01335">
    <property type="entry name" value="Radical_SAM"/>
    <property type="match status" value="1"/>
</dbReference>
<dbReference type="FunFam" id="3.20.20.70:FF:000040">
    <property type="entry name" value="Lipoyl synthase"/>
    <property type="match status" value="1"/>
</dbReference>
<dbReference type="Gene3D" id="3.20.20.70">
    <property type="entry name" value="Aldolase class I"/>
    <property type="match status" value="1"/>
</dbReference>
<dbReference type="HAMAP" id="MF_00206">
    <property type="entry name" value="Lipoyl_synth"/>
    <property type="match status" value="1"/>
</dbReference>
<dbReference type="InterPro" id="IPR013785">
    <property type="entry name" value="Aldolase_TIM"/>
</dbReference>
<dbReference type="InterPro" id="IPR006638">
    <property type="entry name" value="Elp3/MiaA/NifB-like_rSAM"/>
</dbReference>
<dbReference type="InterPro" id="IPR031691">
    <property type="entry name" value="LIAS_N"/>
</dbReference>
<dbReference type="InterPro" id="IPR003698">
    <property type="entry name" value="Lipoyl_synth"/>
</dbReference>
<dbReference type="InterPro" id="IPR007197">
    <property type="entry name" value="rSAM"/>
</dbReference>
<dbReference type="NCBIfam" id="TIGR00510">
    <property type="entry name" value="lipA"/>
    <property type="match status" value="1"/>
</dbReference>
<dbReference type="NCBIfam" id="NF004019">
    <property type="entry name" value="PRK05481.1"/>
    <property type="match status" value="1"/>
</dbReference>
<dbReference type="NCBIfam" id="NF009544">
    <property type="entry name" value="PRK12928.1"/>
    <property type="match status" value="1"/>
</dbReference>
<dbReference type="PANTHER" id="PTHR10949">
    <property type="entry name" value="LIPOYL SYNTHASE"/>
    <property type="match status" value="1"/>
</dbReference>
<dbReference type="PANTHER" id="PTHR10949:SF0">
    <property type="entry name" value="LIPOYL SYNTHASE, MITOCHONDRIAL"/>
    <property type="match status" value="1"/>
</dbReference>
<dbReference type="Pfam" id="PF16881">
    <property type="entry name" value="LIAS_N"/>
    <property type="match status" value="1"/>
</dbReference>
<dbReference type="Pfam" id="PF04055">
    <property type="entry name" value="Radical_SAM"/>
    <property type="match status" value="1"/>
</dbReference>
<dbReference type="PIRSF" id="PIRSF005963">
    <property type="entry name" value="Lipoyl_synth"/>
    <property type="match status" value="1"/>
</dbReference>
<dbReference type="SFLD" id="SFLDF00271">
    <property type="entry name" value="lipoyl_synthase"/>
    <property type="match status" value="1"/>
</dbReference>
<dbReference type="SFLD" id="SFLDG01058">
    <property type="entry name" value="lipoyl_synthase_like"/>
    <property type="match status" value="1"/>
</dbReference>
<dbReference type="SMART" id="SM00729">
    <property type="entry name" value="Elp3"/>
    <property type="match status" value="1"/>
</dbReference>
<dbReference type="SUPFAM" id="SSF102114">
    <property type="entry name" value="Radical SAM enzymes"/>
    <property type="match status" value="1"/>
</dbReference>
<dbReference type="PROSITE" id="PS51918">
    <property type="entry name" value="RADICAL_SAM"/>
    <property type="match status" value="1"/>
</dbReference>
<comment type="function">
    <text evidence="1">Catalyzes the radical-mediated insertion of two sulfur atoms into the C-6 and C-8 positions of the octanoyl moiety bound to the lipoyl domains of lipoate-dependent enzymes, thereby converting the octanoylated domains into lipoylated derivatives.</text>
</comment>
<comment type="catalytic activity">
    <reaction evidence="1">
        <text>[[Fe-S] cluster scaffold protein carrying a second [4Fe-4S](2+) cluster] + N(6)-octanoyl-L-lysyl-[protein] + 2 oxidized [2Fe-2S]-[ferredoxin] + 2 S-adenosyl-L-methionine + 4 H(+) = [[Fe-S] cluster scaffold protein] + N(6)-[(R)-dihydrolipoyl]-L-lysyl-[protein] + 4 Fe(3+) + 2 hydrogen sulfide + 2 5'-deoxyadenosine + 2 L-methionine + 2 reduced [2Fe-2S]-[ferredoxin]</text>
        <dbReference type="Rhea" id="RHEA:16585"/>
        <dbReference type="Rhea" id="RHEA-COMP:9928"/>
        <dbReference type="Rhea" id="RHEA-COMP:10000"/>
        <dbReference type="Rhea" id="RHEA-COMP:10001"/>
        <dbReference type="Rhea" id="RHEA-COMP:10475"/>
        <dbReference type="Rhea" id="RHEA-COMP:14568"/>
        <dbReference type="Rhea" id="RHEA-COMP:14569"/>
        <dbReference type="ChEBI" id="CHEBI:15378"/>
        <dbReference type="ChEBI" id="CHEBI:17319"/>
        <dbReference type="ChEBI" id="CHEBI:29034"/>
        <dbReference type="ChEBI" id="CHEBI:29919"/>
        <dbReference type="ChEBI" id="CHEBI:33722"/>
        <dbReference type="ChEBI" id="CHEBI:33737"/>
        <dbReference type="ChEBI" id="CHEBI:33738"/>
        <dbReference type="ChEBI" id="CHEBI:57844"/>
        <dbReference type="ChEBI" id="CHEBI:59789"/>
        <dbReference type="ChEBI" id="CHEBI:78809"/>
        <dbReference type="ChEBI" id="CHEBI:83100"/>
        <dbReference type="EC" id="2.8.1.8"/>
    </reaction>
</comment>
<comment type="cofactor">
    <cofactor evidence="1">
        <name>[4Fe-4S] cluster</name>
        <dbReference type="ChEBI" id="CHEBI:49883"/>
    </cofactor>
    <text evidence="1">Binds 2 [4Fe-4S] clusters per subunit. One cluster is coordinated with 3 cysteines and an exchangeable S-adenosyl-L-methionine.</text>
</comment>
<comment type="pathway">
    <text evidence="1">Protein modification; protein lipoylation via endogenous pathway; protein N(6)-(lipoyl)lysine from octanoyl-[acyl-carrier-protein]: step 2/2.</text>
</comment>
<comment type="subcellular location">
    <subcellularLocation>
        <location evidence="1">Cytoplasm</location>
    </subcellularLocation>
</comment>
<comment type="similarity">
    <text evidence="1">Belongs to the radical SAM superfamily. Lipoyl synthase family.</text>
</comment>
<accession>P65281</accession>
<accession>Q8YHE2</accession>
<sequence length="322" mass="35957">MVTVLNTVNQSGRLRHPEKAHRPDNEVLKKPDWIRVKAPVSRGYGETREIVRSNKLVTVCEEAGCPNIGECWEKKHATFMIMGEICTRACAFCNISTGIPNALDPNEPENIAKAVKQMGLTHVVITSVDRDDLADGGAHHFAEVIKAVREAAPATTIEILTPDFLRKEGALEIVVKARPDVFNHNLETVPSKYLKVRPGARYFHSIRLLQRVKELDPTIFTKSGIMVGLGEERNEILQLMDDLRSADVDFMTIGQYLQPTRKHHPVIRFVKPDEFKSFETIGKTKGFLLVASSPLTRSSHHAGEDFAKLKAAREALYASRAS</sequence>
<feature type="chain" id="PRO_0000102295" description="Lipoyl synthase">
    <location>
        <begin position="1"/>
        <end position="322"/>
    </location>
</feature>
<feature type="domain" description="Radical SAM core" evidence="2">
    <location>
        <begin position="72"/>
        <end position="288"/>
    </location>
</feature>
<feature type="region of interest" description="Disordered" evidence="3">
    <location>
        <begin position="1"/>
        <end position="22"/>
    </location>
</feature>
<feature type="compositionally biased region" description="Polar residues" evidence="3">
    <location>
        <begin position="1"/>
        <end position="12"/>
    </location>
</feature>
<feature type="binding site" evidence="1">
    <location>
        <position position="60"/>
    </location>
    <ligand>
        <name>[4Fe-4S] cluster</name>
        <dbReference type="ChEBI" id="CHEBI:49883"/>
        <label>1</label>
    </ligand>
</feature>
<feature type="binding site" evidence="1">
    <location>
        <position position="65"/>
    </location>
    <ligand>
        <name>[4Fe-4S] cluster</name>
        <dbReference type="ChEBI" id="CHEBI:49883"/>
        <label>1</label>
    </ligand>
</feature>
<feature type="binding site" evidence="1">
    <location>
        <position position="71"/>
    </location>
    <ligand>
        <name>[4Fe-4S] cluster</name>
        <dbReference type="ChEBI" id="CHEBI:49883"/>
        <label>1</label>
    </ligand>
</feature>
<feature type="binding site" evidence="1">
    <location>
        <position position="86"/>
    </location>
    <ligand>
        <name>[4Fe-4S] cluster</name>
        <dbReference type="ChEBI" id="CHEBI:49883"/>
        <label>2</label>
        <note>4Fe-4S-S-AdoMet</note>
    </ligand>
</feature>
<feature type="binding site" evidence="1">
    <location>
        <position position="90"/>
    </location>
    <ligand>
        <name>[4Fe-4S] cluster</name>
        <dbReference type="ChEBI" id="CHEBI:49883"/>
        <label>2</label>
        <note>4Fe-4S-S-AdoMet</note>
    </ligand>
</feature>
<feature type="binding site" evidence="1">
    <location>
        <position position="93"/>
    </location>
    <ligand>
        <name>[4Fe-4S] cluster</name>
        <dbReference type="ChEBI" id="CHEBI:49883"/>
        <label>2</label>
        <note>4Fe-4S-S-AdoMet</note>
    </ligand>
</feature>
<feature type="binding site" evidence="1">
    <location>
        <position position="299"/>
    </location>
    <ligand>
        <name>[4Fe-4S] cluster</name>
        <dbReference type="ChEBI" id="CHEBI:49883"/>
        <label>1</label>
    </ligand>
</feature>
<keyword id="KW-0004">4Fe-4S</keyword>
<keyword id="KW-0963">Cytoplasm</keyword>
<keyword id="KW-0408">Iron</keyword>
<keyword id="KW-0411">Iron-sulfur</keyword>
<keyword id="KW-0479">Metal-binding</keyword>
<keyword id="KW-0949">S-adenosyl-L-methionine</keyword>
<keyword id="KW-0808">Transferase</keyword>